<organism>
    <name type="scientific">Campylobacter fetus subsp. fetus (strain 82-40)</name>
    <dbReference type="NCBI Taxonomy" id="360106"/>
    <lineage>
        <taxon>Bacteria</taxon>
        <taxon>Pseudomonadati</taxon>
        <taxon>Campylobacterota</taxon>
        <taxon>Epsilonproteobacteria</taxon>
        <taxon>Campylobacterales</taxon>
        <taxon>Campylobacteraceae</taxon>
        <taxon>Campylobacter</taxon>
    </lineage>
</organism>
<gene>
    <name evidence="1" type="primary">uppP</name>
    <name type="ordered locus">CFF8240_1235</name>
</gene>
<protein>
    <recommendedName>
        <fullName evidence="1">Undecaprenyl-diphosphatase</fullName>
        <ecNumber evidence="1">3.6.1.27</ecNumber>
    </recommendedName>
    <alternativeName>
        <fullName evidence="1">Bacitracin resistance protein</fullName>
    </alternativeName>
    <alternativeName>
        <fullName evidence="1">Undecaprenyl pyrophosphate phosphatase</fullName>
    </alternativeName>
</protein>
<feature type="chain" id="PRO_0000290695" description="Undecaprenyl-diphosphatase">
    <location>
        <begin position="1"/>
        <end position="258"/>
    </location>
</feature>
<feature type="transmembrane region" description="Helical" evidence="1">
    <location>
        <begin position="1"/>
        <end position="21"/>
    </location>
</feature>
<feature type="transmembrane region" description="Helical" evidence="1">
    <location>
        <begin position="42"/>
        <end position="62"/>
    </location>
</feature>
<feature type="transmembrane region" description="Helical" evidence="1">
    <location>
        <begin position="69"/>
        <end position="89"/>
    </location>
</feature>
<feature type="transmembrane region" description="Helical" evidence="1">
    <location>
        <begin position="96"/>
        <end position="116"/>
    </location>
</feature>
<feature type="transmembrane region" description="Helical" evidence="1">
    <location>
        <begin position="135"/>
        <end position="155"/>
    </location>
</feature>
<feature type="transmembrane region" description="Helical" evidence="1">
    <location>
        <begin position="173"/>
        <end position="193"/>
    </location>
</feature>
<feature type="transmembrane region" description="Helical" evidence="1">
    <location>
        <begin position="211"/>
        <end position="231"/>
    </location>
</feature>
<feature type="transmembrane region" description="Helical" evidence="1">
    <location>
        <begin position="237"/>
        <end position="257"/>
    </location>
</feature>
<sequence>MDFLNAVILGIVEGLTEFLPVSSTGHMILSAKLLGLEQTSVLKCFEVVIQLGSILAVVFMFFDRLKEDFNLWIKLAIGFVPTAIIGFLAYKHIKTFFEPSTVAYMLIIGGIVFIVVELWHKKINYEGDTKTLHEVSFKQAFIIGLSQCFAMIPGTSRSGSTIITGLLCGLSREVAARFSFLLAIPTMFAATAYDSYKNADIFVQNKEALWIFLVGGFMAFIVALIVIKLFLKFVSKFSYISFGIYRIILGSIFLIYIL</sequence>
<accession>A0RQA9</accession>
<comment type="function">
    <text evidence="1">Catalyzes the dephosphorylation of undecaprenyl diphosphate (UPP). Confers resistance to bacitracin.</text>
</comment>
<comment type="catalytic activity">
    <reaction evidence="1">
        <text>di-trans,octa-cis-undecaprenyl diphosphate + H2O = di-trans,octa-cis-undecaprenyl phosphate + phosphate + H(+)</text>
        <dbReference type="Rhea" id="RHEA:28094"/>
        <dbReference type="ChEBI" id="CHEBI:15377"/>
        <dbReference type="ChEBI" id="CHEBI:15378"/>
        <dbReference type="ChEBI" id="CHEBI:43474"/>
        <dbReference type="ChEBI" id="CHEBI:58405"/>
        <dbReference type="ChEBI" id="CHEBI:60392"/>
        <dbReference type="EC" id="3.6.1.27"/>
    </reaction>
</comment>
<comment type="subcellular location">
    <subcellularLocation>
        <location evidence="1">Cell inner membrane</location>
        <topology evidence="1">Multi-pass membrane protein</topology>
    </subcellularLocation>
</comment>
<comment type="miscellaneous">
    <text>Bacitracin is thought to be involved in the inhibition of peptidoglycan synthesis by sequestering undecaprenyl diphosphate, thereby reducing the pool of lipid carrier available.</text>
</comment>
<comment type="similarity">
    <text evidence="1">Belongs to the UppP family.</text>
</comment>
<dbReference type="EC" id="3.6.1.27" evidence="1"/>
<dbReference type="EMBL" id="CP000487">
    <property type="protein sequence ID" value="ABK82065.1"/>
    <property type="molecule type" value="Genomic_DNA"/>
</dbReference>
<dbReference type="RefSeq" id="WP_002849995.1">
    <property type="nucleotide sequence ID" value="NC_008599.1"/>
</dbReference>
<dbReference type="SMR" id="A0RQA9"/>
<dbReference type="KEGG" id="cff:CFF8240_1235"/>
<dbReference type="eggNOG" id="COG1968">
    <property type="taxonomic scope" value="Bacteria"/>
</dbReference>
<dbReference type="HOGENOM" id="CLU_060296_2_0_7"/>
<dbReference type="Proteomes" id="UP000000760">
    <property type="component" value="Chromosome"/>
</dbReference>
<dbReference type="GO" id="GO:0005886">
    <property type="term" value="C:plasma membrane"/>
    <property type="evidence" value="ECO:0007669"/>
    <property type="project" value="UniProtKB-SubCell"/>
</dbReference>
<dbReference type="GO" id="GO:0050380">
    <property type="term" value="F:undecaprenyl-diphosphatase activity"/>
    <property type="evidence" value="ECO:0007669"/>
    <property type="project" value="UniProtKB-UniRule"/>
</dbReference>
<dbReference type="GO" id="GO:0071555">
    <property type="term" value="P:cell wall organization"/>
    <property type="evidence" value="ECO:0007669"/>
    <property type="project" value="UniProtKB-KW"/>
</dbReference>
<dbReference type="GO" id="GO:0009252">
    <property type="term" value="P:peptidoglycan biosynthetic process"/>
    <property type="evidence" value="ECO:0007669"/>
    <property type="project" value="UniProtKB-KW"/>
</dbReference>
<dbReference type="GO" id="GO:0008360">
    <property type="term" value="P:regulation of cell shape"/>
    <property type="evidence" value="ECO:0007669"/>
    <property type="project" value="UniProtKB-KW"/>
</dbReference>
<dbReference type="GO" id="GO:0046677">
    <property type="term" value="P:response to antibiotic"/>
    <property type="evidence" value="ECO:0007669"/>
    <property type="project" value="UniProtKB-UniRule"/>
</dbReference>
<dbReference type="HAMAP" id="MF_01006">
    <property type="entry name" value="Undec_diphosphatase"/>
    <property type="match status" value="1"/>
</dbReference>
<dbReference type="InterPro" id="IPR003824">
    <property type="entry name" value="UppP"/>
</dbReference>
<dbReference type="NCBIfam" id="NF001389">
    <property type="entry name" value="PRK00281.1-2"/>
    <property type="match status" value="1"/>
</dbReference>
<dbReference type="NCBIfam" id="NF001390">
    <property type="entry name" value="PRK00281.1-4"/>
    <property type="match status" value="1"/>
</dbReference>
<dbReference type="NCBIfam" id="TIGR00753">
    <property type="entry name" value="undec_PP_bacA"/>
    <property type="match status" value="1"/>
</dbReference>
<dbReference type="PANTHER" id="PTHR30622">
    <property type="entry name" value="UNDECAPRENYL-DIPHOSPHATASE"/>
    <property type="match status" value="1"/>
</dbReference>
<dbReference type="PANTHER" id="PTHR30622:SF3">
    <property type="entry name" value="UNDECAPRENYL-DIPHOSPHATASE"/>
    <property type="match status" value="1"/>
</dbReference>
<dbReference type="Pfam" id="PF02673">
    <property type="entry name" value="BacA"/>
    <property type="match status" value="1"/>
</dbReference>
<proteinExistence type="inferred from homology"/>
<evidence type="ECO:0000255" key="1">
    <source>
        <dbReference type="HAMAP-Rule" id="MF_01006"/>
    </source>
</evidence>
<keyword id="KW-0046">Antibiotic resistance</keyword>
<keyword id="KW-0997">Cell inner membrane</keyword>
<keyword id="KW-1003">Cell membrane</keyword>
<keyword id="KW-0133">Cell shape</keyword>
<keyword id="KW-0961">Cell wall biogenesis/degradation</keyword>
<keyword id="KW-0378">Hydrolase</keyword>
<keyword id="KW-0472">Membrane</keyword>
<keyword id="KW-0573">Peptidoglycan synthesis</keyword>
<keyword id="KW-0812">Transmembrane</keyword>
<keyword id="KW-1133">Transmembrane helix</keyword>
<reference key="1">
    <citation type="submission" date="2006-11" db="EMBL/GenBank/DDBJ databases">
        <title>Sequence of Campylobacter fetus subsp. fetus 82-40.</title>
        <authorList>
            <person name="Fouts D.E."/>
            <person name="Nelson K.E."/>
        </authorList>
    </citation>
    <scope>NUCLEOTIDE SEQUENCE [LARGE SCALE GENOMIC DNA]</scope>
    <source>
        <strain>82-40</strain>
    </source>
</reference>
<name>UPPP_CAMFF</name>